<organism>
    <name type="scientific">Dictyostelium discoideum</name>
    <name type="common">Social amoeba</name>
    <dbReference type="NCBI Taxonomy" id="44689"/>
    <lineage>
        <taxon>Eukaryota</taxon>
        <taxon>Amoebozoa</taxon>
        <taxon>Evosea</taxon>
        <taxon>Eumycetozoa</taxon>
        <taxon>Dictyostelia</taxon>
        <taxon>Dictyosteliales</taxon>
        <taxon>Dictyosteliaceae</taxon>
        <taxon>Dictyostelium</taxon>
    </lineage>
</organism>
<keyword id="KW-0489">Methyltransferase</keyword>
<keyword id="KW-0506">mRNA capping</keyword>
<keyword id="KW-0507">mRNA processing</keyword>
<keyword id="KW-1185">Reference proteome</keyword>
<keyword id="KW-0949">S-adenosyl-L-methionine</keyword>
<keyword id="KW-0808">Transferase</keyword>
<accession>Q54WR1</accession>
<dbReference type="EC" id="2.1.1.57"/>
<dbReference type="EMBL" id="AAFI02000031">
    <property type="protein sequence ID" value="EAL67735.1"/>
    <property type="molecule type" value="Genomic_DNA"/>
</dbReference>
<dbReference type="RefSeq" id="XP_641656.1">
    <property type="nucleotide sequence ID" value="XM_636564.1"/>
</dbReference>
<dbReference type="SMR" id="Q54WR1"/>
<dbReference type="FunCoup" id="Q54WR1">
    <property type="interactions" value="527"/>
</dbReference>
<dbReference type="PaxDb" id="44689-DDB0234233"/>
<dbReference type="EnsemblProtists" id="EAL67735">
    <property type="protein sequence ID" value="EAL67735"/>
    <property type="gene ID" value="DDB_G0279593"/>
</dbReference>
<dbReference type="GeneID" id="8622063"/>
<dbReference type="KEGG" id="ddi:DDB_G0279593"/>
<dbReference type="dictyBase" id="DDB_G0279593"/>
<dbReference type="VEuPathDB" id="AmoebaDB:DDB_G0279593"/>
<dbReference type="eggNOG" id="KOG3673">
    <property type="taxonomic scope" value="Eukaryota"/>
</dbReference>
<dbReference type="HOGENOM" id="CLU_368210_0_0_1"/>
<dbReference type="InParanoid" id="Q54WR1"/>
<dbReference type="OMA" id="HFTIQTH"/>
<dbReference type="PhylomeDB" id="Q54WR1"/>
<dbReference type="PRO" id="PR:Q54WR1"/>
<dbReference type="Proteomes" id="UP000002195">
    <property type="component" value="Chromosome 3"/>
</dbReference>
<dbReference type="GO" id="GO:0005737">
    <property type="term" value="C:cytoplasm"/>
    <property type="evidence" value="ECO:0000318"/>
    <property type="project" value="GO_Central"/>
</dbReference>
<dbReference type="GO" id="GO:0005634">
    <property type="term" value="C:nucleus"/>
    <property type="evidence" value="ECO:0000250"/>
    <property type="project" value="UniProtKB"/>
</dbReference>
<dbReference type="GO" id="GO:0004483">
    <property type="term" value="F:mRNA (nucleoside-2'-O-)-methyltransferase activity"/>
    <property type="evidence" value="ECO:0000250"/>
    <property type="project" value="UniProtKB"/>
</dbReference>
<dbReference type="GO" id="GO:0003676">
    <property type="term" value="F:nucleic acid binding"/>
    <property type="evidence" value="ECO:0007669"/>
    <property type="project" value="InterPro"/>
</dbReference>
<dbReference type="GO" id="GO:0006370">
    <property type="term" value="P:7-methylguanosine mRNA capping"/>
    <property type="evidence" value="ECO:0000250"/>
    <property type="project" value="UniProtKB"/>
</dbReference>
<dbReference type="GO" id="GO:0032259">
    <property type="term" value="P:methylation"/>
    <property type="evidence" value="ECO:0007669"/>
    <property type="project" value="UniProtKB-KW"/>
</dbReference>
<dbReference type="GO" id="GO:0006397">
    <property type="term" value="P:mRNA processing"/>
    <property type="evidence" value="ECO:0000250"/>
    <property type="project" value="UniProtKB"/>
</dbReference>
<dbReference type="FunFam" id="3.40.50.12760:FF:000004">
    <property type="entry name" value="FtsJ-like methyltransferase"/>
    <property type="match status" value="1"/>
</dbReference>
<dbReference type="Gene3D" id="3.40.50.12760">
    <property type="match status" value="1"/>
</dbReference>
<dbReference type="InterPro" id="IPR000467">
    <property type="entry name" value="G_patch_dom"/>
</dbReference>
<dbReference type="InterPro" id="IPR050851">
    <property type="entry name" value="mRNA_Cap_2O-Ribose_MeTrfase"/>
</dbReference>
<dbReference type="InterPro" id="IPR002877">
    <property type="entry name" value="RNA_MeTrfase_FtsJ_dom"/>
</dbReference>
<dbReference type="InterPro" id="IPR025816">
    <property type="entry name" value="RrmJ-type_MeTrfase"/>
</dbReference>
<dbReference type="InterPro" id="IPR029063">
    <property type="entry name" value="SAM-dependent_MTases_sf"/>
</dbReference>
<dbReference type="PANTHER" id="PTHR16121:SF0">
    <property type="entry name" value="CAP-SPECIFIC MRNA (NUCLEOSIDE-2'-O-)-METHYLTRANSFERASE 1"/>
    <property type="match status" value="1"/>
</dbReference>
<dbReference type="PANTHER" id="PTHR16121">
    <property type="entry name" value="CAP-SPECIFIC MRNA (NUCLEOSIDE-2'-O-)-METHYLTRANSFERASE 1-RELATED"/>
    <property type="match status" value="1"/>
</dbReference>
<dbReference type="Pfam" id="PF01728">
    <property type="entry name" value="FtsJ"/>
    <property type="match status" value="1"/>
</dbReference>
<dbReference type="Pfam" id="PF01585">
    <property type="entry name" value="G-patch"/>
    <property type="match status" value="1"/>
</dbReference>
<dbReference type="SMART" id="SM00443">
    <property type="entry name" value="G_patch"/>
    <property type="match status" value="1"/>
</dbReference>
<dbReference type="SUPFAM" id="SSF53335">
    <property type="entry name" value="S-adenosyl-L-methionine-dependent methyltransferases"/>
    <property type="match status" value="1"/>
</dbReference>
<dbReference type="PROSITE" id="PS50174">
    <property type="entry name" value="G_PATCH"/>
    <property type="match status" value="1"/>
</dbReference>
<dbReference type="PROSITE" id="PS51613">
    <property type="entry name" value="SAM_MT_RRMJ"/>
    <property type="match status" value="1"/>
</dbReference>
<sequence>MFQSNQYDEYNKTNKSDEENESNENENENENENENRSEDGDQDSEDSFIYEEDDEEEEDTPKLSFGAKFLAKHGHIEGQGLGKEKDGRIDLIEVDRFQSTKGLGFAENDLPEFYRVTKHILEDEDVDFPSKQRFEWISCNSEGYNFWEGFPVDHTLVKFVANDSITDKPRRGHCSVELLMELDQHKNALDTLDPNRFYVARKKSNPYESIKGSIFINRAAVKMANIDKLADLLTPIIPVPGKPRDFIYFGDVCAGPGGFTEYVYWKKTRGGKIKGEEGLDLDDVVKGFGFTIKGQCDWNVEKFSKQIPIHNFVKEYGLDDTGNILKSENIRDFSSKVFYNTNGFGLQLFLADGGINTDGKESLQELMLQQLILCQILTMFETIGRGGNFVCKIFDTFTPFTIGLLYLVYQHFQSFSIVKPFTSRPLNSERYIICKNFLSYRPMNIIDFLHYINSLLNNNQTILELIEINSMDPNFLRYILESNELICLRQIKAFSLFKKYVEDIELPPIDQKEIRAKCLEEWGLPKETKYDIENYQKHKNRQKHHHNNHSNNNNNNNNSNNNNNNNNQHQHQHHQHQHHQNQHQNQYQHQNQHKKYNNNINNNSNNSSPNSSPNLTSSPNLNSPPNINNGNNHQNNNNNNSNNNNNNNNNNNNNNNNNNNNNNNNNNNKNRRFISTKLVKNNSQFQQKPPPPHRHMSPLQIQQQFLLQQQKEQQLLQQPQKDQLHQLHQQQSQSALPDFSAANFMEALLKRKNDSQQ</sequence>
<proteinExistence type="inferred from homology"/>
<reference key="1">
    <citation type="journal article" date="2005" name="Nature">
        <title>The genome of the social amoeba Dictyostelium discoideum.</title>
        <authorList>
            <person name="Eichinger L."/>
            <person name="Pachebat J.A."/>
            <person name="Gloeckner G."/>
            <person name="Rajandream M.A."/>
            <person name="Sucgang R."/>
            <person name="Berriman M."/>
            <person name="Song J."/>
            <person name="Olsen R."/>
            <person name="Szafranski K."/>
            <person name="Xu Q."/>
            <person name="Tunggal B."/>
            <person name="Kummerfeld S."/>
            <person name="Madera M."/>
            <person name="Konfortov B.A."/>
            <person name="Rivero F."/>
            <person name="Bankier A.T."/>
            <person name="Lehmann R."/>
            <person name="Hamlin N."/>
            <person name="Davies R."/>
            <person name="Gaudet P."/>
            <person name="Fey P."/>
            <person name="Pilcher K."/>
            <person name="Chen G."/>
            <person name="Saunders D."/>
            <person name="Sodergren E.J."/>
            <person name="Davis P."/>
            <person name="Kerhornou A."/>
            <person name="Nie X."/>
            <person name="Hall N."/>
            <person name="Anjard C."/>
            <person name="Hemphill L."/>
            <person name="Bason N."/>
            <person name="Farbrother P."/>
            <person name="Desany B."/>
            <person name="Just E."/>
            <person name="Morio T."/>
            <person name="Rost R."/>
            <person name="Churcher C.M."/>
            <person name="Cooper J."/>
            <person name="Haydock S."/>
            <person name="van Driessche N."/>
            <person name="Cronin A."/>
            <person name="Goodhead I."/>
            <person name="Muzny D.M."/>
            <person name="Mourier T."/>
            <person name="Pain A."/>
            <person name="Lu M."/>
            <person name="Harper D."/>
            <person name="Lindsay R."/>
            <person name="Hauser H."/>
            <person name="James K.D."/>
            <person name="Quiles M."/>
            <person name="Madan Babu M."/>
            <person name="Saito T."/>
            <person name="Buchrieser C."/>
            <person name="Wardroper A."/>
            <person name="Felder M."/>
            <person name="Thangavelu M."/>
            <person name="Johnson D."/>
            <person name="Knights A."/>
            <person name="Loulseged H."/>
            <person name="Mungall K.L."/>
            <person name="Oliver K."/>
            <person name="Price C."/>
            <person name="Quail M.A."/>
            <person name="Urushihara H."/>
            <person name="Hernandez J."/>
            <person name="Rabbinowitsch E."/>
            <person name="Steffen D."/>
            <person name="Sanders M."/>
            <person name="Ma J."/>
            <person name="Kohara Y."/>
            <person name="Sharp S."/>
            <person name="Simmonds M.N."/>
            <person name="Spiegler S."/>
            <person name="Tivey A."/>
            <person name="Sugano S."/>
            <person name="White B."/>
            <person name="Walker D."/>
            <person name="Woodward J.R."/>
            <person name="Winckler T."/>
            <person name="Tanaka Y."/>
            <person name="Shaulsky G."/>
            <person name="Schleicher M."/>
            <person name="Weinstock G.M."/>
            <person name="Rosenthal A."/>
            <person name="Cox E.C."/>
            <person name="Chisholm R.L."/>
            <person name="Gibbs R.A."/>
            <person name="Loomis W.F."/>
            <person name="Platzer M."/>
            <person name="Kay R.R."/>
            <person name="Williams J.G."/>
            <person name="Dear P.H."/>
            <person name="Noegel A.A."/>
            <person name="Barrell B.G."/>
            <person name="Kuspa A."/>
        </authorList>
    </citation>
    <scope>NUCLEOTIDE SEQUENCE [LARGE SCALE GENOMIC DNA]</scope>
    <source>
        <strain>AX4</strain>
    </source>
</reference>
<name>MTR1_DICDI</name>
<evidence type="ECO:0000250" key="1"/>
<evidence type="ECO:0000255" key="2">
    <source>
        <dbReference type="PROSITE-ProRule" id="PRU00092"/>
    </source>
</evidence>
<evidence type="ECO:0000255" key="3">
    <source>
        <dbReference type="PROSITE-ProRule" id="PRU00945"/>
    </source>
</evidence>
<evidence type="ECO:0000256" key="4">
    <source>
        <dbReference type="SAM" id="MobiDB-lite"/>
    </source>
</evidence>
<gene>
    <name type="ORF">DDB_G0279593</name>
</gene>
<feature type="chain" id="PRO_0000399806" description="Cap-specific mRNA (nucleoside-2'-O-)-methyltransferase 1">
    <location>
        <begin position="1"/>
        <end position="757"/>
    </location>
</feature>
<feature type="domain" description="G-patch" evidence="2">
    <location>
        <begin position="62"/>
        <end position="108"/>
    </location>
</feature>
<feature type="domain" description="RrmJ-type SAM-dependent 2'-O-MTase" evidence="3">
    <location>
        <begin position="214"/>
        <end position="438"/>
    </location>
</feature>
<feature type="region of interest" description="Disordered" evidence="4">
    <location>
        <begin position="1"/>
        <end position="61"/>
    </location>
</feature>
<feature type="region of interest" description="Disordered" evidence="4">
    <location>
        <begin position="538"/>
        <end position="670"/>
    </location>
</feature>
<feature type="compositionally biased region" description="Acidic residues" evidence="4">
    <location>
        <begin position="18"/>
        <end position="32"/>
    </location>
</feature>
<feature type="compositionally biased region" description="Acidic residues" evidence="4">
    <location>
        <begin position="40"/>
        <end position="59"/>
    </location>
</feature>
<feature type="compositionally biased region" description="Basic residues" evidence="4">
    <location>
        <begin position="538"/>
        <end position="548"/>
    </location>
</feature>
<feature type="compositionally biased region" description="Low complexity" evidence="4">
    <location>
        <begin position="549"/>
        <end position="569"/>
    </location>
</feature>
<feature type="compositionally biased region" description="Basic residues" evidence="4">
    <location>
        <begin position="570"/>
        <end position="581"/>
    </location>
</feature>
<feature type="compositionally biased region" description="Low complexity" evidence="4">
    <location>
        <begin position="597"/>
        <end position="668"/>
    </location>
</feature>
<feature type="active site" description="Proton acceptor" evidence="3">
    <location>
        <position position="392"/>
    </location>
</feature>
<feature type="binding site" evidence="3">
    <location>
        <position position="257"/>
    </location>
    <ligand>
        <name>S-adenosyl-L-methionine</name>
        <dbReference type="ChEBI" id="CHEBI:59789"/>
    </ligand>
</feature>
<feature type="binding site" evidence="3">
    <location>
        <position position="301"/>
    </location>
    <ligand>
        <name>S-adenosyl-L-methionine</name>
        <dbReference type="ChEBI" id="CHEBI:59789"/>
    </ligand>
</feature>
<feature type="binding site" evidence="3">
    <location>
        <position position="352"/>
    </location>
    <ligand>
        <name>S-adenosyl-L-methionine</name>
        <dbReference type="ChEBI" id="CHEBI:59789"/>
    </ligand>
</feature>
<comment type="function">
    <text evidence="1">S-adenosyl-L-methionine-dependent methyltransferase that mediates mRNA cap1 2'-O-ribose methylation to the 5'-cap structure of mRNAs. Methylates the ribose of the first nucleotide of a m(7)GpppG-capped mRNA to produce m(7)GpppNmp (cap1). Cap1 modification is linked to higher levels of translation.</text>
</comment>
<comment type="catalytic activity">
    <reaction>
        <text>a 5'-end (N(7)-methyl 5'-triphosphoguanosine)-ribonucleoside in mRNA + S-adenosyl-L-methionine = a 5'-end (N(7)-methyl 5'-triphosphoguanosine)-(2'-O-methyl-ribonucleoside) in mRNA + S-adenosyl-L-homocysteine + H(+)</text>
        <dbReference type="Rhea" id="RHEA:67020"/>
        <dbReference type="Rhea" id="RHEA-COMP:17167"/>
        <dbReference type="Rhea" id="RHEA-COMP:17168"/>
        <dbReference type="ChEBI" id="CHEBI:15378"/>
        <dbReference type="ChEBI" id="CHEBI:57856"/>
        <dbReference type="ChEBI" id="CHEBI:59789"/>
        <dbReference type="ChEBI" id="CHEBI:156461"/>
        <dbReference type="ChEBI" id="CHEBI:167609"/>
        <dbReference type="EC" id="2.1.1.57"/>
    </reaction>
</comment>
<protein>
    <recommendedName>
        <fullName>Cap-specific mRNA (nucleoside-2'-O-)-methyltransferase 1</fullName>
        <ecNumber>2.1.1.57</ecNumber>
    </recommendedName>
    <alternativeName>
        <fullName>Cap1 2'O-ribose methyltransferase 1</fullName>
        <shortName>MTr1</shortName>
    </alternativeName>
</protein>